<accession>Q9RY44</accession>
<reference key="1">
    <citation type="journal article" date="1999" name="Science">
        <title>Genome sequence of the radioresistant bacterium Deinococcus radiodurans R1.</title>
        <authorList>
            <person name="White O."/>
            <person name="Eisen J.A."/>
            <person name="Heidelberg J.F."/>
            <person name="Hickey E.K."/>
            <person name="Peterson J.D."/>
            <person name="Dodson R.J."/>
            <person name="Haft D.H."/>
            <person name="Gwinn M.L."/>
            <person name="Nelson W.C."/>
            <person name="Richardson D.L."/>
            <person name="Moffat K.S."/>
            <person name="Qin H."/>
            <person name="Jiang L."/>
            <person name="Pamphile W."/>
            <person name="Crosby M."/>
            <person name="Shen M."/>
            <person name="Vamathevan J.J."/>
            <person name="Lam P."/>
            <person name="McDonald L.A."/>
            <person name="Utterback T.R."/>
            <person name="Zalewski C."/>
            <person name="Makarova K.S."/>
            <person name="Aravind L."/>
            <person name="Daly M.J."/>
            <person name="Minton K.W."/>
            <person name="Fleischmann R.D."/>
            <person name="Ketchum K.A."/>
            <person name="Nelson K.E."/>
            <person name="Salzberg S.L."/>
            <person name="Smith H.O."/>
            <person name="Venter J.C."/>
            <person name="Fraser C.M."/>
        </authorList>
    </citation>
    <scope>NUCLEOTIDE SEQUENCE [LARGE SCALE GENOMIC DNA]</scope>
    <source>
        <strain>ATCC 13939 / DSM 20539 / JCM 16871 / CCUG 27074 / LMG 4051 / NBRC 15346 / NCIMB 9279 / VKM B-1422 / R1</strain>
    </source>
</reference>
<evidence type="ECO:0000250" key="1"/>
<evidence type="ECO:0000255" key="2"/>
<evidence type="ECO:0000305" key="3"/>
<comment type="function">
    <text evidence="1">Multidrug efflux pump.</text>
</comment>
<comment type="subcellular location">
    <subcellularLocation>
        <location evidence="1">Cell membrane</location>
        <topology evidence="1">Multi-pass membrane protein</topology>
    </subcellularLocation>
</comment>
<comment type="similarity">
    <text evidence="3">Belongs to the multi antimicrobial extrusion (MATE) (TC 2.A.66.1) family.</text>
</comment>
<protein>
    <recommendedName>
        <fullName>Probable multidrug resistance protein NorM</fullName>
    </recommendedName>
    <alternativeName>
        <fullName>Multidrug-efflux transporter</fullName>
    </alternativeName>
</protein>
<organism>
    <name type="scientific">Deinococcus radiodurans (strain ATCC 13939 / DSM 20539 / JCM 16871 / CCUG 27074 / LMG 4051 / NBRC 15346 / NCIMB 9279 / VKM B-1422 / R1)</name>
    <dbReference type="NCBI Taxonomy" id="243230"/>
    <lineage>
        <taxon>Bacteria</taxon>
        <taxon>Thermotogati</taxon>
        <taxon>Deinococcota</taxon>
        <taxon>Deinococci</taxon>
        <taxon>Deinococcales</taxon>
        <taxon>Deinococcaceae</taxon>
        <taxon>Deinococcus</taxon>
    </lineage>
</organism>
<keyword id="KW-0050">Antiport</keyword>
<keyword id="KW-1003">Cell membrane</keyword>
<keyword id="KW-0406">Ion transport</keyword>
<keyword id="KW-0472">Membrane</keyword>
<keyword id="KW-1185">Reference proteome</keyword>
<keyword id="KW-0812">Transmembrane</keyword>
<keyword id="KW-1133">Transmembrane helix</keyword>
<keyword id="KW-0813">Transport</keyword>
<gene>
    <name type="primary">norM</name>
    <name type="ordered locus">DR_0107</name>
</gene>
<feature type="chain" id="PRO_0000164216" description="Probable multidrug resistance protein NorM">
    <location>
        <begin position="1"/>
        <end position="451"/>
    </location>
</feature>
<feature type="transmembrane region" description="Helical" evidence="2">
    <location>
        <begin position="23"/>
        <end position="43"/>
    </location>
</feature>
<feature type="transmembrane region" description="Helical" evidence="2">
    <location>
        <begin position="53"/>
        <end position="73"/>
    </location>
</feature>
<feature type="transmembrane region" description="Helical" evidence="2">
    <location>
        <begin position="101"/>
        <end position="121"/>
    </location>
</feature>
<feature type="transmembrane region" description="Helical" evidence="2">
    <location>
        <begin position="132"/>
        <end position="152"/>
    </location>
</feature>
<feature type="transmembrane region" description="Helical" evidence="2">
    <location>
        <begin position="169"/>
        <end position="189"/>
    </location>
</feature>
<feature type="transmembrane region" description="Helical" evidence="2">
    <location>
        <begin position="194"/>
        <end position="214"/>
    </location>
</feature>
<feature type="transmembrane region" description="Helical" evidence="2">
    <location>
        <begin position="243"/>
        <end position="263"/>
    </location>
</feature>
<feature type="transmembrane region" description="Helical" evidence="2">
    <location>
        <begin position="277"/>
        <end position="297"/>
    </location>
</feature>
<feature type="transmembrane region" description="Helical" evidence="2">
    <location>
        <begin position="316"/>
        <end position="336"/>
    </location>
</feature>
<feature type="transmembrane region" description="Helical" evidence="2">
    <location>
        <begin position="355"/>
        <end position="375"/>
    </location>
</feature>
<feature type="transmembrane region" description="Helical" evidence="2">
    <location>
        <begin position="391"/>
        <end position="411"/>
    </location>
</feature>
<feature type="transmembrane region" description="Helical" evidence="2">
    <location>
        <begin position="422"/>
        <end position="442"/>
    </location>
</feature>
<dbReference type="EMBL" id="AE000513">
    <property type="protein sequence ID" value="AAF09695.1"/>
    <property type="molecule type" value="Genomic_DNA"/>
</dbReference>
<dbReference type="PIR" id="H75559">
    <property type="entry name" value="H75559"/>
</dbReference>
<dbReference type="RefSeq" id="NP_293833.1">
    <property type="nucleotide sequence ID" value="NC_001263.1"/>
</dbReference>
<dbReference type="RefSeq" id="WP_010886755.1">
    <property type="nucleotide sequence ID" value="NC_001263.1"/>
</dbReference>
<dbReference type="SMR" id="Q9RY44"/>
<dbReference type="FunCoup" id="Q9RY44">
    <property type="interactions" value="212"/>
</dbReference>
<dbReference type="STRING" id="243230.DR_0107"/>
<dbReference type="PaxDb" id="243230-DR_0107"/>
<dbReference type="EnsemblBacteria" id="AAF09695">
    <property type="protein sequence ID" value="AAF09695"/>
    <property type="gene ID" value="DR_0107"/>
</dbReference>
<dbReference type="GeneID" id="69516337"/>
<dbReference type="KEGG" id="dra:DR_0107"/>
<dbReference type="PATRIC" id="fig|243230.17.peg.272"/>
<dbReference type="eggNOG" id="COG0534">
    <property type="taxonomic scope" value="Bacteria"/>
</dbReference>
<dbReference type="HOGENOM" id="CLU_012893_6_3_0"/>
<dbReference type="InParanoid" id="Q9RY44"/>
<dbReference type="OrthoDB" id="9780160at2"/>
<dbReference type="Proteomes" id="UP000002524">
    <property type="component" value="Chromosome 1"/>
</dbReference>
<dbReference type="GO" id="GO:0016020">
    <property type="term" value="C:membrane"/>
    <property type="evidence" value="ECO:0000318"/>
    <property type="project" value="GO_Central"/>
</dbReference>
<dbReference type="GO" id="GO:0005886">
    <property type="term" value="C:plasma membrane"/>
    <property type="evidence" value="ECO:0007669"/>
    <property type="project" value="UniProtKB-SubCell"/>
</dbReference>
<dbReference type="GO" id="GO:0015297">
    <property type="term" value="F:antiporter activity"/>
    <property type="evidence" value="ECO:0007669"/>
    <property type="project" value="UniProtKB-KW"/>
</dbReference>
<dbReference type="GO" id="GO:0022857">
    <property type="term" value="F:transmembrane transporter activity"/>
    <property type="evidence" value="ECO:0000318"/>
    <property type="project" value="GO_Central"/>
</dbReference>
<dbReference type="GO" id="GO:0042910">
    <property type="term" value="F:xenobiotic transmembrane transporter activity"/>
    <property type="evidence" value="ECO:0007669"/>
    <property type="project" value="InterPro"/>
</dbReference>
<dbReference type="GO" id="GO:0006811">
    <property type="term" value="P:monoatomic ion transport"/>
    <property type="evidence" value="ECO:0007669"/>
    <property type="project" value="UniProtKB-KW"/>
</dbReference>
<dbReference type="CDD" id="cd13131">
    <property type="entry name" value="MATE_NorM_like"/>
    <property type="match status" value="1"/>
</dbReference>
<dbReference type="InterPro" id="IPR002528">
    <property type="entry name" value="MATE_fam"/>
</dbReference>
<dbReference type="InterPro" id="IPR050222">
    <property type="entry name" value="MATE_MdtK"/>
</dbReference>
<dbReference type="InterPro" id="IPR048279">
    <property type="entry name" value="MdtK-like"/>
</dbReference>
<dbReference type="NCBIfam" id="TIGR00797">
    <property type="entry name" value="matE"/>
    <property type="match status" value="1"/>
</dbReference>
<dbReference type="PANTHER" id="PTHR43298:SF2">
    <property type="entry name" value="FMN_FAD EXPORTER YEEO-RELATED"/>
    <property type="match status" value="1"/>
</dbReference>
<dbReference type="PANTHER" id="PTHR43298">
    <property type="entry name" value="MULTIDRUG RESISTANCE PROTEIN NORM-RELATED"/>
    <property type="match status" value="1"/>
</dbReference>
<dbReference type="Pfam" id="PF01554">
    <property type="entry name" value="MatE"/>
    <property type="match status" value="2"/>
</dbReference>
<dbReference type="PIRSF" id="PIRSF006603">
    <property type="entry name" value="DinF"/>
    <property type="match status" value="1"/>
</dbReference>
<sequence>MTTLPAPTISTTAELRALLRLAGPVVVSQFAANALALIATAVIGRLGERELAAAAYANAAYYLVFIMVVGVMLSVAPRVAQAHGAGDARGVARALGGGLRLALLLSAVMLPLMWALSFVLPNFAPAGVSRDLVAAYLRVYSLGMLPNLAFIALRGTLEGTGKPGAVTGVALTGVVWALLVAPALAFGWGPLPRLGLAGAAGASASAAWIMAALLWPLARRRVAYAGPLGPLGDEVRALFRLGWPIGLTLGAEGGMFSVTTLLMARFGPEVLAAHNVTMQTITAFFMVPLGIASATGVRVGTEAGAGRLAQARRAGLVGLGLSSAVMLTFAVIELAAPRTVFSVFVNVNDPANAGLIAAATGFLSIAALFQLMDGLQVTANGALRGLQDTRVPLLVSLVAYWVVGLGLGSVLSSVAGLGARGLWFGLTAGLTLAGLSLVGRFLYRTRAGRAA</sequence>
<proteinExistence type="inferred from homology"/>
<name>NORM_DEIRA</name>